<sequence length="299" mass="31231">MAQLIDGKKLAEDVVSTVKTETEKLVAATGVVPGIAVVIVGEDPASQVYVASKSRKAKECGFHSVQHDLPETASEQELLNLIEGLNNDPAIHGILVQLPLPGHIDSGRVIQTIAPEKDVDGFHFINVGKLGTGEVETAFVPCTPAGAMIMIERVHGRDLSGLNAVVIGRSNIVGKPMFNLLLAANATVTVAHSRTKDLPAIARNADILVAAVGRPQMVKGDWVKPGATVIDVGINRIPAPERGEGKTRLVGDVDFAEAEKVAGAITPVPGGVGPMTIAMLMANTLTAACRSAGMKKPVF</sequence>
<reference key="1">
    <citation type="submission" date="2007-12" db="EMBL/GenBank/DDBJ databases">
        <title>Brucella suis ATCC 23445 whole genome shotgun sequencing project.</title>
        <authorList>
            <person name="Setubal J.C."/>
            <person name="Bowns C."/>
            <person name="Boyle S."/>
            <person name="Crasta O.R."/>
            <person name="Czar M.J."/>
            <person name="Dharmanolla C."/>
            <person name="Gillespie J.J."/>
            <person name="Kenyon R.W."/>
            <person name="Lu J."/>
            <person name="Mane S."/>
            <person name="Mohapatra S."/>
            <person name="Nagrani S."/>
            <person name="Purkayastha A."/>
            <person name="Rajasimha H.K."/>
            <person name="Shallom J.M."/>
            <person name="Shallom S."/>
            <person name="Shukla M."/>
            <person name="Snyder E.E."/>
            <person name="Sobral B.W."/>
            <person name="Wattam A.R."/>
            <person name="Will R."/>
            <person name="Williams K."/>
            <person name="Yoo H."/>
            <person name="Bruce D."/>
            <person name="Detter C."/>
            <person name="Munk C."/>
            <person name="Brettin T.S."/>
        </authorList>
    </citation>
    <scope>NUCLEOTIDE SEQUENCE [LARGE SCALE GENOMIC DNA]</scope>
    <source>
        <strain>ATCC 23445 / NCTC 10510</strain>
    </source>
</reference>
<accession>A9WZ75</accession>
<proteinExistence type="inferred from homology"/>
<comment type="function">
    <text evidence="1">Catalyzes the oxidation of 5,10-methylenetetrahydrofolate to 5,10-methenyltetrahydrofolate and then the hydrolysis of 5,10-methenyltetrahydrofolate to 10-formyltetrahydrofolate.</text>
</comment>
<comment type="catalytic activity">
    <reaction evidence="1">
        <text>(6R)-5,10-methylene-5,6,7,8-tetrahydrofolate + NADP(+) = (6R)-5,10-methenyltetrahydrofolate + NADPH</text>
        <dbReference type="Rhea" id="RHEA:22812"/>
        <dbReference type="ChEBI" id="CHEBI:15636"/>
        <dbReference type="ChEBI" id="CHEBI:57455"/>
        <dbReference type="ChEBI" id="CHEBI:57783"/>
        <dbReference type="ChEBI" id="CHEBI:58349"/>
        <dbReference type="EC" id="1.5.1.5"/>
    </reaction>
</comment>
<comment type="catalytic activity">
    <reaction evidence="1">
        <text>(6R)-5,10-methenyltetrahydrofolate + H2O = (6R)-10-formyltetrahydrofolate + H(+)</text>
        <dbReference type="Rhea" id="RHEA:23700"/>
        <dbReference type="ChEBI" id="CHEBI:15377"/>
        <dbReference type="ChEBI" id="CHEBI:15378"/>
        <dbReference type="ChEBI" id="CHEBI:57455"/>
        <dbReference type="ChEBI" id="CHEBI:195366"/>
        <dbReference type="EC" id="3.5.4.9"/>
    </reaction>
</comment>
<comment type="pathway">
    <text evidence="1">One-carbon metabolism; tetrahydrofolate interconversion.</text>
</comment>
<comment type="subunit">
    <text evidence="1">Homodimer.</text>
</comment>
<comment type="similarity">
    <text evidence="1">Belongs to the tetrahydrofolate dehydrogenase/cyclohydrolase family.</text>
</comment>
<keyword id="KW-0028">Amino-acid biosynthesis</keyword>
<keyword id="KW-0368">Histidine biosynthesis</keyword>
<keyword id="KW-0378">Hydrolase</keyword>
<keyword id="KW-0486">Methionine biosynthesis</keyword>
<keyword id="KW-0511">Multifunctional enzyme</keyword>
<keyword id="KW-0521">NADP</keyword>
<keyword id="KW-0554">One-carbon metabolism</keyword>
<keyword id="KW-0560">Oxidoreductase</keyword>
<keyword id="KW-0658">Purine biosynthesis</keyword>
<protein>
    <recommendedName>
        <fullName evidence="1">Bifunctional protein FolD</fullName>
    </recommendedName>
    <domain>
        <recommendedName>
            <fullName evidence="1">Methylenetetrahydrofolate dehydrogenase</fullName>
            <ecNumber evidence="1">1.5.1.5</ecNumber>
        </recommendedName>
    </domain>
    <domain>
        <recommendedName>
            <fullName evidence="1">Methenyltetrahydrofolate cyclohydrolase</fullName>
            <ecNumber evidence="1">3.5.4.9</ecNumber>
        </recommendedName>
    </domain>
</protein>
<feature type="chain" id="PRO_1000087891" description="Bifunctional protein FolD">
    <location>
        <begin position="1"/>
        <end position="299"/>
    </location>
</feature>
<feature type="binding site" evidence="1">
    <location>
        <begin position="168"/>
        <end position="170"/>
    </location>
    <ligand>
        <name>NADP(+)</name>
        <dbReference type="ChEBI" id="CHEBI:58349"/>
    </ligand>
</feature>
<feature type="binding site" evidence="1">
    <location>
        <position position="193"/>
    </location>
    <ligand>
        <name>NADP(+)</name>
        <dbReference type="ChEBI" id="CHEBI:58349"/>
    </ligand>
</feature>
<feature type="binding site" evidence="1">
    <location>
        <position position="234"/>
    </location>
    <ligand>
        <name>NADP(+)</name>
        <dbReference type="ChEBI" id="CHEBI:58349"/>
    </ligand>
</feature>
<evidence type="ECO:0000255" key="1">
    <source>
        <dbReference type="HAMAP-Rule" id="MF_01576"/>
    </source>
</evidence>
<organism>
    <name type="scientific">Brucella suis (strain ATCC 23445 / NCTC 10510)</name>
    <dbReference type="NCBI Taxonomy" id="470137"/>
    <lineage>
        <taxon>Bacteria</taxon>
        <taxon>Pseudomonadati</taxon>
        <taxon>Pseudomonadota</taxon>
        <taxon>Alphaproteobacteria</taxon>
        <taxon>Hyphomicrobiales</taxon>
        <taxon>Brucellaceae</taxon>
        <taxon>Brucella/Ochrobactrum group</taxon>
        <taxon>Brucella</taxon>
    </lineage>
</organism>
<name>FOLD_BRUSI</name>
<gene>
    <name evidence="1" type="primary">folD</name>
    <name type="ordered locus">BSUIS_B0773</name>
</gene>
<dbReference type="EC" id="1.5.1.5" evidence="1"/>
<dbReference type="EC" id="3.5.4.9" evidence="1"/>
<dbReference type="EMBL" id="CP000912">
    <property type="protein sequence ID" value="ABY39741.1"/>
    <property type="molecule type" value="Genomic_DNA"/>
</dbReference>
<dbReference type="RefSeq" id="WP_002967255.1">
    <property type="nucleotide sequence ID" value="NC_010167.1"/>
</dbReference>
<dbReference type="SMR" id="A9WZ75"/>
<dbReference type="GeneID" id="97535127"/>
<dbReference type="KEGG" id="bmt:BSUIS_B0773"/>
<dbReference type="HOGENOM" id="CLU_034045_1_2_5"/>
<dbReference type="UniPathway" id="UPA00193"/>
<dbReference type="Proteomes" id="UP000008545">
    <property type="component" value="Chromosome II"/>
</dbReference>
<dbReference type="GO" id="GO:0005829">
    <property type="term" value="C:cytosol"/>
    <property type="evidence" value="ECO:0007669"/>
    <property type="project" value="TreeGrafter"/>
</dbReference>
<dbReference type="GO" id="GO:0004477">
    <property type="term" value="F:methenyltetrahydrofolate cyclohydrolase activity"/>
    <property type="evidence" value="ECO:0007669"/>
    <property type="project" value="UniProtKB-UniRule"/>
</dbReference>
<dbReference type="GO" id="GO:0004488">
    <property type="term" value="F:methylenetetrahydrofolate dehydrogenase (NADP+) activity"/>
    <property type="evidence" value="ECO:0007669"/>
    <property type="project" value="UniProtKB-UniRule"/>
</dbReference>
<dbReference type="GO" id="GO:0000105">
    <property type="term" value="P:L-histidine biosynthetic process"/>
    <property type="evidence" value="ECO:0007669"/>
    <property type="project" value="UniProtKB-KW"/>
</dbReference>
<dbReference type="GO" id="GO:0009086">
    <property type="term" value="P:methionine biosynthetic process"/>
    <property type="evidence" value="ECO:0007669"/>
    <property type="project" value="UniProtKB-KW"/>
</dbReference>
<dbReference type="GO" id="GO:0006164">
    <property type="term" value="P:purine nucleotide biosynthetic process"/>
    <property type="evidence" value="ECO:0007669"/>
    <property type="project" value="UniProtKB-KW"/>
</dbReference>
<dbReference type="GO" id="GO:0035999">
    <property type="term" value="P:tetrahydrofolate interconversion"/>
    <property type="evidence" value="ECO:0007669"/>
    <property type="project" value="UniProtKB-UniRule"/>
</dbReference>
<dbReference type="CDD" id="cd01080">
    <property type="entry name" value="NAD_bind_m-THF_DH_Cyclohyd"/>
    <property type="match status" value="1"/>
</dbReference>
<dbReference type="FunFam" id="3.40.50.720:FF:000006">
    <property type="entry name" value="Bifunctional protein FolD"/>
    <property type="match status" value="1"/>
</dbReference>
<dbReference type="FunFam" id="3.40.50.10860:FF:000005">
    <property type="entry name" value="C-1-tetrahydrofolate synthase, cytoplasmic, putative"/>
    <property type="match status" value="1"/>
</dbReference>
<dbReference type="Gene3D" id="3.40.50.10860">
    <property type="entry name" value="Leucine Dehydrogenase, chain A, domain 1"/>
    <property type="match status" value="1"/>
</dbReference>
<dbReference type="Gene3D" id="3.40.50.720">
    <property type="entry name" value="NAD(P)-binding Rossmann-like Domain"/>
    <property type="match status" value="1"/>
</dbReference>
<dbReference type="HAMAP" id="MF_01576">
    <property type="entry name" value="THF_DHG_CYH"/>
    <property type="match status" value="1"/>
</dbReference>
<dbReference type="InterPro" id="IPR046346">
    <property type="entry name" value="Aminoacid_DH-like_N_sf"/>
</dbReference>
<dbReference type="InterPro" id="IPR036291">
    <property type="entry name" value="NAD(P)-bd_dom_sf"/>
</dbReference>
<dbReference type="InterPro" id="IPR000672">
    <property type="entry name" value="THF_DH/CycHdrlase"/>
</dbReference>
<dbReference type="InterPro" id="IPR020630">
    <property type="entry name" value="THF_DH/CycHdrlase_cat_dom"/>
</dbReference>
<dbReference type="InterPro" id="IPR020867">
    <property type="entry name" value="THF_DH/CycHdrlase_CS"/>
</dbReference>
<dbReference type="InterPro" id="IPR020631">
    <property type="entry name" value="THF_DH/CycHdrlase_NAD-bd_dom"/>
</dbReference>
<dbReference type="NCBIfam" id="NF008058">
    <property type="entry name" value="PRK10792.1"/>
    <property type="match status" value="1"/>
</dbReference>
<dbReference type="NCBIfam" id="NF010783">
    <property type="entry name" value="PRK14186.1"/>
    <property type="match status" value="1"/>
</dbReference>
<dbReference type="NCBIfam" id="NF010785">
    <property type="entry name" value="PRK14188.1"/>
    <property type="match status" value="1"/>
</dbReference>
<dbReference type="PANTHER" id="PTHR48099:SF5">
    <property type="entry name" value="C-1-TETRAHYDROFOLATE SYNTHASE, CYTOPLASMIC"/>
    <property type="match status" value="1"/>
</dbReference>
<dbReference type="PANTHER" id="PTHR48099">
    <property type="entry name" value="C-1-TETRAHYDROFOLATE SYNTHASE, CYTOPLASMIC-RELATED"/>
    <property type="match status" value="1"/>
</dbReference>
<dbReference type="Pfam" id="PF00763">
    <property type="entry name" value="THF_DHG_CYH"/>
    <property type="match status" value="1"/>
</dbReference>
<dbReference type="Pfam" id="PF02882">
    <property type="entry name" value="THF_DHG_CYH_C"/>
    <property type="match status" value="1"/>
</dbReference>
<dbReference type="PRINTS" id="PR00085">
    <property type="entry name" value="THFDHDRGNASE"/>
</dbReference>
<dbReference type="SUPFAM" id="SSF53223">
    <property type="entry name" value="Aminoacid dehydrogenase-like, N-terminal domain"/>
    <property type="match status" value="1"/>
</dbReference>
<dbReference type="SUPFAM" id="SSF51735">
    <property type="entry name" value="NAD(P)-binding Rossmann-fold domains"/>
    <property type="match status" value="1"/>
</dbReference>
<dbReference type="PROSITE" id="PS00766">
    <property type="entry name" value="THF_DHG_CYH_1"/>
    <property type="match status" value="1"/>
</dbReference>
<dbReference type="PROSITE" id="PS00767">
    <property type="entry name" value="THF_DHG_CYH_2"/>
    <property type="match status" value="1"/>
</dbReference>